<protein>
    <recommendedName>
        <fullName>Alpha-amylase inhibitor 4</fullName>
    </recommendedName>
    <alternativeName>
        <fullName>SI alpha-4</fullName>
    </alternativeName>
</protein>
<dbReference type="PIR" id="S28201">
    <property type="entry name" value="S28201"/>
</dbReference>
<dbReference type="SMR" id="P81367"/>
<dbReference type="MEROPS" id="I06.002"/>
<dbReference type="ExpressionAtlas" id="P81367">
    <property type="expression patterns" value="baseline and differential"/>
</dbReference>
<dbReference type="GO" id="GO:0005576">
    <property type="term" value="C:extracellular region"/>
    <property type="evidence" value="ECO:0007669"/>
    <property type="project" value="UniProtKB-SubCell"/>
</dbReference>
<dbReference type="GO" id="GO:0015066">
    <property type="term" value="F:alpha-amylase inhibitor activity"/>
    <property type="evidence" value="ECO:0007669"/>
    <property type="project" value="UniProtKB-KW"/>
</dbReference>
<dbReference type="GO" id="GO:0004867">
    <property type="term" value="F:serine-type endopeptidase inhibitor activity"/>
    <property type="evidence" value="ECO:0007669"/>
    <property type="project" value="InterPro"/>
</dbReference>
<dbReference type="CDD" id="cd00261">
    <property type="entry name" value="AAI_SS"/>
    <property type="match status" value="1"/>
</dbReference>
<dbReference type="Gene3D" id="1.10.110.10">
    <property type="entry name" value="Plant lipid-transfer and hydrophobic proteins"/>
    <property type="match status" value="1"/>
</dbReference>
<dbReference type="InterPro" id="IPR006106">
    <property type="entry name" value="Allergen/soft/tryp_amyl_inhib"/>
</dbReference>
<dbReference type="InterPro" id="IPR006105">
    <property type="entry name" value="Allergen/tryp_amyl_inhib_CS"/>
</dbReference>
<dbReference type="InterPro" id="IPR036312">
    <property type="entry name" value="Bifun_inhib/LTP/seed_sf"/>
</dbReference>
<dbReference type="InterPro" id="IPR016140">
    <property type="entry name" value="Bifunc_inhib/LTP/seed_store"/>
</dbReference>
<dbReference type="PANTHER" id="PTHR34481:SF16">
    <property type="entry name" value="BIFUNCTIONAL INHIBITOR_PLANT LIPID TRANSFER PROTEIN_SEED STORAGE HELICAL DOMAIN-CONTAINING PROTEIN"/>
    <property type="match status" value="1"/>
</dbReference>
<dbReference type="PANTHER" id="PTHR34481">
    <property type="entry name" value="TRYPSIN/FACTOR XIIA INHIBITOR-RELATED"/>
    <property type="match status" value="1"/>
</dbReference>
<dbReference type="Pfam" id="PF00234">
    <property type="entry name" value="Tryp_alpha_amyl"/>
    <property type="match status" value="1"/>
</dbReference>
<dbReference type="PRINTS" id="PR00808">
    <property type="entry name" value="AMLASEINHBTR"/>
</dbReference>
<dbReference type="SMART" id="SM00499">
    <property type="entry name" value="AAI"/>
    <property type="match status" value="1"/>
</dbReference>
<dbReference type="SUPFAM" id="SSF47699">
    <property type="entry name" value="Bifunctional inhibitor/lipid-transfer protein/seed storage 2S albumin"/>
    <property type="match status" value="1"/>
</dbReference>
<dbReference type="PROSITE" id="PS00426">
    <property type="entry name" value="CEREAL_TRYP_AMYL_INH"/>
    <property type="match status" value="1"/>
</dbReference>
<evidence type="ECO:0000250" key="1"/>
<evidence type="ECO:0000305" key="2"/>
<comment type="function">
    <text>Alpha-amylase inhibitor.</text>
</comment>
<comment type="subcellular location">
    <subcellularLocation>
        <location>Secreted</location>
    </subcellularLocation>
</comment>
<comment type="similarity">
    <text evidence="2">Belongs to the protease inhibitor I6 (cereal trypsin/alpha-amylase inhibitor) family.</text>
</comment>
<proteinExistence type="evidence at protein level"/>
<organism>
    <name type="scientific">Sorghum bicolor</name>
    <name type="common">Sorghum</name>
    <name type="synonym">Sorghum vulgare</name>
    <dbReference type="NCBI Taxonomy" id="4558"/>
    <lineage>
        <taxon>Eukaryota</taxon>
        <taxon>Viridiplantae</taxon>
        <taxon>Streptophyta</taxon>
        <taxon>Embryophyta</taxon>
        <taxon>Tracheophyta</taxon>
        <taxon>Spermatophyta</taxon>
        <taxon>Magnoliopsida</taxon>
        <taxon>Liliopsida</taxon>
        <taxon>Poales</taxon>
        <taxon>Poaceae</taxon>
        <taxon>PACMAD clade</taxon>
        <taxon>Panicoideae</taxon>
        <taxon>Andropogonodae</taxon>
        <taxon>Andropogoneae</taxon>
        <taxon>Sorghinae</taxon>
        <taxon>Sorghum</taxon>
    </lineage>
</organism>
<accession>P81367</accession>
<keyword id="KW-0022">Alpha-amylase inhibitor</keyword>
<keyword id="KW-0903">Direct protein sequencing</keyword>
<keyword id="KW-1015">Disulfide bond</keyword>
<keyword id="KW-0964">Secreted</keyword>
<name>IAA4_SORBI</name>
<reference key="1">
    <citation type="journal article" date="1992" name="Protein Seq. Data Anal.">
        <title>The amino acid sequences of two 13-kDa alpha-amylase inhibitors from the seeds of Sorghum bicolor (L.) Moench.</title>
        <authorList>
            <person name="Bloch C. Jr."/>
            <person name="Richardson M."/>
        </authorList>
    </citation>
    <scope>PROTEIN SEQUENCE</scope>
    <source>
        <strain>cv. French red</strain>
        <tissue>Seed</tissue>
    </source>
</reference>
<feature type="chain" id="PRO_0000070493" description="Alpha-amylase inhibitor 4">
    <location>
        <begin position="1"/>
        <end position="118"/>
    </location>
</feature>
<feature type="disulfide bond" evidence="1">
    <location>
        <begin position="7"/>
        <end position="60"/>
    </location>
</feature>
<feature type="disulfide bond" evidence="1">
    <location>
        <begin position="21"/>
        <end position="49"/>
    </location>
</feature>
<feature type="disulfide bond" evidence="1">
    <location>
        <begin position="30"/>
        <end position="82"/>
    </location>
</feature>
<feature type="disulfide bond" evidence="1">
    <location>
        <begin position="50"/>
        <end position="101"/>
    </location>
</feature>
<sequence length="118" mass="12500">TVDVTACAPGLAIPAPPLPTCRTFARPRTCGLGGPYGPVDPSPVLKQRCCRELAAVPSRCRCAALGFMMDGVDAPLQDFRGCTREMQRIYAVSRLTRAAECNLPTIPGGGCHLSNSPR</sequence>